<evidence type="ECO:0000255" key="1">
    <source>
        <dbReference type="HAMAP-Rule" id="MF_01038"/>
    </source>
</evidence>
<protein>
    <recommendedName>
        <fullName evidence="1">2,3-bisphosphoglycerate-independent phosphoglycerate mutase</fullName>
        <shortName evidence="1">BPG-independent PGAM</shortName>
        <shortName evidence="1">Phosphoglyceromutase</shortName>
        <shortName evidence="1">iPGM</shortName>
        <ecNumber evidence="1">5.4.2.12</ecNumber>
    </recommendedName>
</protein>
<feature type="chain" id="PRO_0000212152" description="2,3-bisphosphoglycerate-independent phosphoglycerate mutase">
    <location>
        <begin position="1"/>
        <end position="510"/>
    </location>
</feature>
<feature type="active site" description="Phosphoserine intermediate" evidence="1">
    <location>
        <position position="66"/>
    </location>
</feature>
<feature type="binding site" evidence="1">
    <location>
        <position position="16"/>
    </location>
    <ligand>
        <name>Mn(2+)</name>
        <dbReference type="ChEBI" id="CHEBI:29035"/>
        <label>2</label>
    </ligand>
</feature>
<feature type="binding site" evidence="1">
    <location>
        <position position="66"/>
    </location>
    <ligand>
        <name>Mn(2+)</name>
        <dbReference type="ChEBI" id="CHEBI:29035"/>
        <label>2</label>
    </ligand>
</feature>
<feature type="binding site" evidence="1">
    <location>
        <position position="127"/>
    </location>
    <ligand>
        <name>substrate</name>
    </ligand>
</feature>
<feature type="binding site" evidence="1">
    <location>
        <begin position="156"/>
        <end position="157"/>
    </location>
    <ligand>
        <name>substrate</name>
    </ligand>
</feature>
<feature type="binding site" evidence="1">
    <location>
        <position position="186"/>
    </location>
    <ligand>
        <name>substrate</name>
    </ligand>
</feature>
<feature type="binding site" evidence="1">
    <location>
        <position position="192"/>
    </location>
    <ligand>
        <name>substrate</name>
    </ligand>
</feature>
<feature type="binding site" evidence="1">
    <location>
        <begin position="257"/>
        <end position="260"/>
    </location>
    <ligand>
        <name>substrate</name>
    </ligand>
</feature>
<feature type="binding site" evidence="1">
    <location>
        <position position="333"/>
    </location>
    <ligand>
        <name>substrate</name>
    </ligand>
</feature>
<feature type="binding site" evidence="1">
    <location>
        <position position="400"/>
    </location>
    <ligand>
        <name>Mn(2+)</name>
        <dbReference type="ChEBI" id="CHEBI:29035"/>
        <label>1</label>
    </ligand>
</feature>
<feature type="binding site" evidence="1">
    <location>
        <position position="404"/>
    </location>
    <ligand>
        <name>Mn(2+)</name>
        <dbReference type="ChEBI" id="CHEBI:29035"/>
        <label>1</label>
    </ligand>
</feature>
<feature type="binding site" evidence="1">
    <location>
        <position position="441"/>
    </location>
    <ligand>
        <name>Mn(2+)</name>
        <dbReference type="ChEBI" id="CHEBI:29035"/>
        <label>2</label>
    </ligand>
</feature>
<feature type="binding site" evidence="1">
    <location>
        <position position="442"/>
    </location>
    <ligand>
        <name>Mn(2+)</name>
        <dbReference type="ChEBI" id="CHEBI:29035"/>
        <label>2</label>
    </ligand>
</feature>
<feature type="binding site" evidence="1">
    <location>
        <position position="460"/>
    </location>
    <ligand>
        <name>Mn(2+)</name>
        <dbReference type="ChEBI" id="CHEBI:29035"/>
        <label>1</label>
    </ligand>
</feature>
<organism>
    <name type="scientific">Gluconobacter oxydans (strain 621H)</name>
    <name type="common">Gluconobacter suboxydans</name>
    <dbReference type="NCBI Taxonomy" id="290633"/>
    <lineage>
        <taxon>Bacteria</taxon>
        <taxon>Pseudomonadati</taxon>
        <taxon>Pseudomonadota</taxon>
        <taxon>Alphaproteobacteria</taxon>
        <taxon>Acetobacterales</taxon>
        <taxon>Acetobacteraceae</taxon>
        <taxon>Gluconobacter</taxon>
    </lineage>
</organism>
<gene>
    <name evidence="1" type="primary">gpmI</name>
    <name type="ordered locus">GOX0330</name>
</gene>
<dbReference type="EC" id="5.4.2.12" evidence="1"/>
<dbReference type="EMBL" id="CP000009">
    <property type="protein sequence ID" value="AAW60113.1"/>
    <property type="molecule type" value="Genomic_DNA"/>
</dbReference>
<dbReference type="RefSeq" id="WP_011251916.1">
    <property type="nucleotide sequence ID" value="NC_006677.1"/>
</dbReference>
<dbReference type="SMR" id="Q5FU33"/>
<dbReference type="STRING" id="290633.GOX0330"/>
<dbReference type="KEGG" id="gox:GOX0330"/>
<dbReference type="eggNOG" id="COG0696">
    <property type="taxonomic scope" value="Bacteria"/>
</dbReference>
<dbReference type="HOGENOM" id="CLU_026099_2_0_5"/>
<dbReference type="UniPathway" id="UPA00109">
    <property type="reaction ID" value="UER00186"/>
</dbReference>
<dbReference type="Proteomes" id="UP000006375">
    <property type="component" value="Chromosome"/>
</dbReference>
<dbReference type="GO" id="GO:0005737">
    <property type="term" value="C:cytoplasm"/>
    <property type="evidence" value="ECO:0007669"/>
    <property type="project" value="InterPro"/>
</dbReference>
<dbReference type="GO" id="GO:0030145">
    <property type="term" value="F:manganese ion binding"/>
    <property type="evidence" value="ECO:0007669"/>
    <property type="project" value="UniProtKB-UniRule"/>
</dbReference>
<dbReference type="GO" id="GO:0004619">
    <property type="term" value="F:phosphoglycerate mutase activity"/>
    <property type="evidence" value="ECO:0007669"/>
    <property type="project" value="UniProtKB-EC"/>
</dbReference>
<dbReference type="GO" id="GO:0006007">
    <property type="term" value="P:glucose catabolic process"/>
    <property type="evidence" value="ECO:0007669"/>
    <property type="project" value="InterPro"/>
</dbReference>
<dbReference type="GO" id="GO:0006096">
    <property type="term" value="P:glycolytic process"/>
    <property type="evidence" value="ECO:0007669"/>
    <property type="project" value="UniProtKB-UniRule"/>
</dbReference>
<dbReference type="CDD" id="cd16010">
    <property type="entry name" value="iPGM"/>
    <property type="match status" value="1"/>
</dbReference>
<dbReference type="FunFam" id="3.40.1450.10:FF:000002">
    <property type="entry name" value="2,3-bisphosphoglycerate-independent phosphoglycerate mutase"/>
    <property type="match status" value="1"/>
</dbReference>
<dbReference type="Gene3D" id="3.40.720.10">
    <property type="entry name" value="Alkaline Phosphatase, subunit A"/>
    <property type="match status" value="1"/>
</dbReference>
<dbReference type="Gene3D" id="3.40.1450.10">
    <property type="entry name" value="BPG-independent phosphoglycerate mutase, domain B"/>
    <property type="match status" value="1"/>
</dbReference>
<dbReference type="HAMAP" id="MF_01038">
    <property type="entry name" value="GpmI"/>
    <property type="match status" value="1"/>
</dbReference>
<dbReference type="InterPro" id="IPR017850">
    <property type="entry name" value="Alkaline_phosphatase_core_sf"/>
</dbReference>
<dbReference type="InterPro" id="IPR011258">
    <property type="entry name" value="BPG-indep_PGM_N"/>
</dbReference>
<dbReference type="InterPro" id="IPR006124">
    <property type="entry name" value="Metalloenzyme"/>
</dbReference>
<dbReference type="InterPro" id="IPR036646">
    <property type="entry name" value="PGAM_B_sf"/>
</dbReference>
<dbReference type="InterPro" id="IPR005995">
    <property type="entry name" value="Pgm_bpd_ind"/>
</dbReference>
<dbReference type="NCBIfam" id="TIGR01307">
    <property type="entry name" value="pgm_bpd_ind"/>
    <property type="match status" value="1"/>
</dbReference>
<dbReference type="PANTHER" id="PTHR31637">
    <property type="entry name" value="2,3-BISPHOSPHOGLYCERATE-INDEPENDENT PHOSPHOGLYCERATE MUTASE"/>
    <property type="match status" value="1"/>
</dbReference>
<dbReference type="PANTHER" id="PTHR31637:SF0">
    <property type="entry name" value="2,3-BISPHOSPHOGLYCERATE-INDEPENDENT PHOSPHOGLYCERATE MUTASE"/>
    <property type="match status" value="1"/>
</dbReference>
<dbReference type="Pfam" id="PF06415">
    <property type="entry name" value="iPGM_N"/>
    <property type="match status" value="1"/>
</dbReference>
<dbReference type="Pfam" id="PF01676">
    <property type="entry name" value="Metalloenzyme"/>
    <property type="match status" value="1"/>
</dbReference>
<dbReference type="PIRSF" id="PIRSF001492">
    <property type="entry name" value="IPGAM"/>
    <property type="match status" value="1"/>
</dbReference>
<dbReference type="SUPFAM" id="SSF64158">
    <property type="entry name" value="2,3-Bisphosphoglycerate-independent phosphoglycerate mutase, substrate-binding domain"/>
    <property type="match status" value="1"/>
</dbReference>
<dbReference type="SUPFAM" id="SSF53649">
    <property type="entry name" value="Alkaline phosphatase-like"/>
    <property type="match status" value="1"/>
</dbReference>
<name>GPMI_GLUOX</name>
<reference key="1">
    <citation type="journal article" date="2005" name="Nat. Biotechnol.">
        <title>Complete genome sequence of the acetic acid bacterium Gluconobacter oxydans.</title>
        <authorList>
            <person name="Prust C."/>
            <person name="Hoffmeister M."/>
            <person name="Liesegang H."/>
            <person name="Wiezer A."/>
            <person name="Fricke W.F."/>
            <person name="Ehrenreich A."/>
            <person name="Gottschalk G."/>
            <person name="Deppenmeier U."/>
        </authorList>
    </citation>
    <scope>NUCLEOTIDE SEQUENCE [LARGE SCALE GENOMIC DNA]</scope>
    <source>
        <strain>621H</strain>
    </source>
</reference>
<sequence length="510" mass="54517">MSASSTPRPVMLVILDGFGWREDESDNAVRLANTPTFDTLWATSPHAFLKTSGEDVGLPDGQMGNSEVGHLNIGAGRVVMQELPRISRSARDGSLAQNPALLEFIAALKASGGTCHLMGLISPGGVHAHQDHVVALTKIVSAAGVPVAVHIFSDGRDTAPRSGEDFIGKFLKELPDSVQIATLSGRYYAMDRDRRWERVALAVEAIRDAKGPHAKDALSALQASYASDKGDEFVLPTVLGDYAGMKDGDGILACNFRADRIRQLLDVLVLPDFTEYDSGRKVKFAAVCGMSRYSDHLAPYMSILFPKVPLDDLLGDVVAKAGRTQLRMAETEKYPHVTYFLNGGREVQFDGEERILVPSPKVATYDLQPEMSAPELTDKAVAAIESGKFDMIVLNFANPDMVGHTGSLSAAIKACETVDQGLGRINDAIVKAGGVLLVTADHGNCETMRDPVTGGAHTSHTLNVVPVILAHARGETIHDGRLADLAPTMLALMGVKQPDAMTGVSLLESA</sequence>
<proteinExistence type="inferred from homology"/>
<accession>Q5FU33</accession>
<keyword id="KW-0324">Glycolysis</keyword>
<keyword id="KW-0413">Isomerase</keyword>
<keyword id="KW-0464">Manganese</keyword>
<keyword id="KW-0479">Metal-binding</keyword>
<keyword id="KW-1185">Reference proteome</keyword>
<comment type="function">
    <text evidence="1">Catalyzes the interconversion of 2-phosphoglycerate and 3-phosphoglycerate.</text>
</comment>
<comment type="catalytic activity">
    <reaction evidence="1">
        <text>(2R)-2-phosphoglycerate = (2R)-3-phosphoglycerate</text>
        <dbReference type="Rhea" id="RHEA:15901"/>
        <dbReference type="ChEBI" id="CHEBI:58272"/>
        <dbReference type="ChEBI" id="CHEBI:58289"/>
        <dbReference type="EC" id="5.4.2.12"/>
    </reaction>
</comment>
<comment type="cofactor">
    <cofactor evidence="1">
        <name>Mn(2+)</name>
        <dbReference type="ChEBI" id="CHEBI:29035"/>
    </cofactor>
    <text evidence="1">Binds 2 manganese ions per subunit.</text>
</comment>
<comment type="pathway">
    <text evidence="1">Carbohydrate degradation; glycolysis; pyruvate from D-glyceraldehyde 3-phosphate: step 3/5.</text>
</comment>
<comment type="subunit">
    <text evidence="1">Monomer.</text>
</comment>
<comment type="similarity">
    <text evidence="1">Belongs to the BPG-independent phosphoglycerate mutase family.</text>
</comment>